<protein>
    <recommendedName>
        <fullName evidence="1">Large ribosomal subunit protein uL4</fullName>
    </recommendedName>
    <alternativeName>
        <fullName evidence="2">50S ribosomal protein L4</fullName>
    </alternativeName>
</protein>
<sequence>MKAKVLNLKGEVTEEIELPEVFAEEFRPDIIKRAVLALQSHRRQPYGPNPLSGVDYSWENWGPGHGYARVPRWKLGRRAVVVPQAVGGRRAHPPKPERKWAEKINKKEMRKALKSAIAATANEELVRQRSHVFEGELPKVVSNELESVKRTKDVAEVFRAIGVYADVERAKERKRYRAGRGKMRGRRYVKKKSVLLVVGKDDGVVKAAKNLPGVDAVVVKDLNVELLAPGCHPGRLTVWTKSAVEYLGEWLC</sequence>
<organism>
    <name type="scientific">Archaeoglobus fulgidus (strain ATCC 49558 / DSM 4304 / JCM 9628 / NBRC 100126 / VC-16)</name>
    <dbReference type="NCBI Taxonomy" id="224325"/>
    <lineage>
        <taxon>Archaea</taxon>
        <taxon>Methanobacteriati</taxon>
        <taxon>Methanobacteriota</taxon>
        <taxon>Archaeoglobi</taxon>
        <taxon>Archaeoglobales</taxon>
        <taxon>Archaeoglobaceae</taxon>
        <taxon>Archaeoglobus</taxon>
    </lineage>
</organism>
<accession>O28355</accession>
<keyword id="KW-1185">Reference proteome</keyword>
<keyword id="KW-0687">Ribonucleoprotein</keyword>
<keyword id="KW-0689">Ribosomal protein</keyword>
<keyword id="KW-0694">RNA-binding</keyword>
<keyword id="KW-0699">rRNA-binding</keyword>
<reference key="1">
    <citation type="journal article" date="1997" name="Nature">
        <title>The complete genome sequence of the hyperthermophilic, sulphate-reducing archaeon Archaeoglobus fulgidus.</title>
        <authorList>
            <person name="Klenk H.-P."/>
            <person name="Clayton R.A."/>
            <person name="Tomb J.-F."/>
            <person name="White O."/>
            <person name="Nelson K.E."/>
            <person name="Ketchum K.A."/>
            <person name="Dodson R.J."/>
            <person name="Gwinn M.L."/>
            <person name="Hickey E.K."/>
            <person name="Peterson J.D."/>
            <person name="Richardson D.L."/>
            <person name="Kerlavage A.R."/>
            <person name="Graham D.E."/>
            <person name="Kyrpides N.C."/>
            <person name="Fleischmann R.D."/>
            <person name="Quackenbush J."/>
            <person name="Lee N.H."/>
            <person name="Sutton G.G."/>
            <person name="Gill S.R."/>
            <person name="Kirkness E.F."/>
            <person name="Dougherty B.A."/>
            <person name="McKenney K."/>
            <person name="Adams M.D."/>
            <person name="Loftus B.J."/>
            <person name="Peterson S.N."/>
            <person name="Reich C.I."/>
            <person name="McNeil L.K."/>
            <person name="Badger J.H."/>
            <person name="Glodek A."/>
            <person name="Zhou L."/>
            <person name="Overbeek R."/>
            <person name="Gocayne J.D."/>
            <person name="Weidman J.F."/>
            <person name="McDonald L.A."/>
            <person name="Utterback T.R."/>
            <person name="Cotton M.D."/>
            <person name="Spriggs T."/>
            <person name="Artiach P."/>
            <person name="Kaine B.P."/>
            <person name="Sykes S.M."/>
            <person name="Sadow P.W."/>
            <person name="D'Andrea K.P."/>
            <person name="Bowman C."/>
            <person name="Fujii C."/>
            <person name="Garland S.A."/>
            <person name="Mason T.M."/>
            <person name="Olsen G.J."/>
            <person name="Fraser C.M."/>
            <person name="Smith H.O."/>
            <person name="Woese C.R."/>
            <person name="Venter J.C."/>
        </authorList>
    </citation>
    <scope>NUCLEOTIDE SEQUENCE [LARGE SCALE GENOMIC DNA]</scope>
    <source>
        <strain>ATCC 49558 / DSM 4304 / JCM 9628 / NBRC 100126 / VC-16</strain>
    </source>
</reference>
<proteinExistence type="inferred from homology"/>
<feature type="chain" id="PRO_0000129328" description="Large ribosomal subunit protein uL4">
    <location>
        <begin position="1"/>
        <end position="252"/>
    </location>
</feature>
<name>RL4_ARCFU</name>
<gene>
    <name evidence="1" type="primary">rpl4</name>
    <name type="ordered locus">AF_1924</name>
</gene>
<comment type="function">
    <text evidence="1">One of the primary rRNA binding proteins, this protein initially binds near the 5'-end of the 23S rRNA. It is important during the early stages of 50S assembly. It makes multiple contacts with different domains of the 23S rRNA in the assembled 50S subunit and ribosome.</text>
</comment>
<comment type="function">
    <text evidence="1">Forms part of the polypeptide exit tunnel.</text>
</comment>
<comment type="subunit">
    <text evidence="1">Part of the 50S ribosomal subunit.</text>
</comment>
<comment type="similarity">
    <text evidence="1">Belongs to the universal ribosomal protein uL4 family.</text>
</comment>
<dbReference type="EMBL" id="AE000782">
    <property type="protein sequence ID" value="AAB89332.1"/>
    <property type="molecule type" value="Genomic_DNA"/>
</dbReference>
<dbReference type="PIR" id="C69490">
    <property type="entry name" value="C69490"/>
</dbReference>
<dbReference type="SMR" id="O28355"/>
<dbReference type="STRING" id="224325.AF_1924"/>
<dbReference type="PaxDb" id="224325-AF_1924"/>
<dbReference type="EnsemblBacteria" id="AAB89332">
    <property type="protein sequence ID" value="AAB89332"/>
    <property type="gene ID" value="AF_1924"/>
</dbReference>
<dbReference type="KEGG" id="afu:AF_1924"/>
<dbReference type="eggNOG" id="arCOG04071">
    <property type="taxonomic scope" value="Archaea"/>
</dbReference>
<dbReference type="HOGENOM" id="CLU_026535_0_0_2"/>
<dbReference type="OrthoDB" id="10737at2157"/>
<dbReference type="PhylomeDB" id="O28355"/>
<dbReference type="Proteomes" id="UP000002199">
    <property type="component" value="Chromosome"/>
</dbReference>
<dbReference type="GO" id="GO:1990904">
    <property type="term" value="C:ribonucleoprotein complex"/>
    <property type="evidence" value="ECO:0007669"/>
    <property type="project" value="UniProtKB-KW"/>
</dbReference>
<dbReference type="GO" id="GO:0005840">
    <property type="term" value="C:ribosome"/>
    <property type="evidence" value="ECO:0007669"/>
    <property type="project" value="UniProtKB-KW"/>
</dbReference>
<dbReference type="GO" id="GO:0019843">
    <property type="term" value="F:rRNA binding"/>
    <property type="evidence" value="ECO:0007669"/>
    <property type="project" value="UniProtKB-UniRule"/>
</dbReference>
<dbReference type="GO" id="GO:0003735">
    <property type="term" value="F:structural constituent of ribosome"/>
    <property type="evidence" value="ECO:0007669"/>
    <property type="project" value="InterPro"/>
</dbReference>
<dbReference type="GO" id="GO:0006412">
    <property type="term" value="P:translation"/>
    <property type="evidence" value="ECO:0007669"/>
    <property type="project" value="UniProtKB-UniRule"/>
</dbReference>
<dbReference type="Gene3D" id="3.40.1370.10">
    <property type="match status" value="1"/>
</dbReference>
<dbReference type="HAMAP" id="MF_01328_A">
    <property type="entry name" value="Ribosomal_uL4_A"/>
    <property type="match status" value="1"/>
</dbReference>
<dbReference type="InterPro" id="IPR002136">
    <property type="entry name" value="Ribosomal_uL4"/>
</dbReference>
<dbReference type="InterPro" id="IPR023574">
    <property type="entry name" value="Ribosomal_uL4_dom_sf"/>
</dbReference>
<dbReference type="InterPro" id="IPR013000">
    <property type="entry name" value="Ribosomal_uL4_euk/arc_CS"/>
</dbReference>
<dbReference type="InterPro" id="IPR045240">
    <property type="entry name" value="Ribosomal_uL4_euk/arch"/>
</dbReference>
<dbReference type="InterPro" id="IPR019970">
    <property type="entry name" value="Ribosomall_uL4-arc"/>
</dbReference>
<dbReference type="NCBIfam" id="TIGR03672">
    <property type="entry name" value="rpl4p_arch"/>
    <property type="match status" value="1"/>
</dbReference>
<dbReference type="PANTHER" id="PTHR19431">
    <property type="entry name" value="60S RIBOSOMAL PROTEIN L4"/>
    <property type="match status" value="1"/>
</dbReference>
<dbReference type="Pfam" id="PF00573">
    <property type="entry name" value="Ribosomal_L4"/>
    <property type="match status" value="1"/>
</dbReference>
<dbReference type="SUPFAM" id="SSF52166">
    <property type="entry name" value="Ribosomal protein L4"/>
    <property type="match status" value="1"/>
</dbReference>
<dbReference type="PROSITE" id="PS00939">
    <property type="entry name" value="RIBOSOMAL_L1E"/>
    <property type="match status" value="1"/>
</dbReference>
<evidence type="ECO:0000255" key="1">
    <source>
        <dbReference type="HAMAP-Rule" id="MF_01328"/>
    </source>
</evidence>
<evidence type="ECO:0000305" key="2"/>